<proteinExistence type="inferred from homology"/>
<accession>Q394I6</accession>
<keyword id="KW-0145">Chemotaxis</keyword>
<keyword id="KW-0963">Cytoplasm</keyword>
<keyword id="KW-0378">Hydrolase</keyword>
<keyword id="KW-0597">Phosphoprotein</keyword>
<feature type="chain" id="PRO_0000225449" description="Protein-glutamate methylesterase/protein-glutamine glutaminase 1">
    <location>
        <begin position="1"/>
        <end position="334"/>
    </location>
</feature>
<feature type="domain" description="Response regulatory" evidence="1">
    <location>
        <begin position="2"/>
        <end position="120"/>
    </location>
</feature>
<feature type="domain" description="CheB-type methylesterase" evidence="1">
    <location>
        <begin position="145"/>
        <end position="334"/>
    </location>
</feature>
<feature type="active site" evidence="1">
    <location>
        <position position="157"/>
    </location>
</feature>
<feature type="active site" evidence="1">
    <location>
        <position position="184"/>
    </location>
</feature>
<feature type="active site" evidence="1">
    <location>
        <position position="277"/>
    </location>
</feature>
<feature type="modified residue" description="4-aspartylphosphate" evidence="1">
    <location>
        <position position="53"/>
    </location>
</feature>
<gene>
    <name evidence="1" type="primary">cheB1</name>
    <name type="ordered locus">Bcep18194_B2017</name>
</gene>
<reference key="1">
    <citation type="submission" date="2005-10" db="EMBL/GenBank/DDBJ databases">
        <title>Complete sequence of chromosome 2 of Burkholderia sp. 383.</title>
        <authorList>
            <consortium name="US DOE Joint Genome Institute"/>
            <person name="Copeland A."/>
            <person name="Lucas S."/>
            <person name="Lapidus A."/>
            <person name="Barry K."/>
            <person name="Detter J.C."/>
            <person name="Glavina T."/>
            <person name="Hammon N."/>
            <person name="Israni S."/>
            <person name="Pitluck S."/>
            <person name="Chain P."/>
            <person name="Malfatti S."/>
            <person name="Shin M."/>
            <person name="Vergez L."/>
            <person name="Schmutz J."/>
            <person name="Larimer F."/>
            <person name="Land M."/>
            <person name="Kyrpides N."/>
            <person name="Lykidis A."/>
            <person name="Richardson P."/>
        </authorList>
    </citation>
    <scope>NUCLEOTIDE SEQUENCE [LARGE SCALE GENOMIC DNA]</scope>
    <source>
        <strain>ATCC 17760 / DSM 23089 / LMG 22485 / NCIMB 9086 / R18194 / 383</strain>
    </source>
</reference>
<evidence type="ECO:0000255" key="1">
    <source>
        <dbReference type="HAMAP-Rule" id="MF_00099"/>
    </source>
</evidence>
<name>CHEB1_BURL3</name>
<organism>
    <name type="scientific">Burkholderia lata (strain ATCC 17760 / DSM 23089 / LMG 22485 / NCIMB 9086 / R18194 / 383)</name>
    <dbReference type="NCBI Taxonomy" id="482957"/>
    <lineage>
        <taxon>Bacteria</taxon>
        <taxon>Pseudomonadati</taxon>
        <taxon>Pseudomonadota</taxon>
        <taxon>Betaproteobacteria</taxon>
        <taxon>Burkholderiales</taxon>
        <taxon>Burkholderiaceae</taxon>
        <taxon>Burkholderia</taxon>
        <taxon>Burkholderia cepacia complex</taxon>
    </lineage>
</organism>
<comment type="function">
    <text evidence="1">Involved in chemotaxis. Part of a chemotaxis signal transduction system that modulates chemotaxis in response to various stimuli. Catalyzes the demethylation of specific methylglutamate residues introduced into the chemoreceptors (methyl-accepting chemotaxis proteins or MCP) by CheR. Also mediates the irreversible deamidation of specific glutamine residues to glutamic acid.</text>
</comment>
<comment type="catalytic activity">
    <reaction evidence="1">
        <text>[protein]-L-glutamate 5-O-methyl ester + H2O = L-glutamyl-[protein] + methanol + H(+)</text>
        <dbReference type="Rhea" id="RHEA:23236"/>
        <dbReference type="Rhea" id="RHEA-COMP:10208"/>
        <dbReference type="Rhea" id="RHEA-COMP:10311"/>
        <dbReference type="ChEBI" id="CHEBI:15377"/>
        <dbReference type="ChEBI" id="CHEBI:15378"/>
        <dbReference type="ChEBI" id="CHEBI:17790"/>
        <dbReference type="ChEBI" id="CHEBI:29973"/>
        <dbReference type="ChEBI" id="CHEBI:82795"/>
        <dbReference type="EC" id="3.1.1.61"/>
    </reaction>
</comment>
<comment type="catalytic activity">
    <reaction evidence="1">
        <text>L-glutaminyl-[protein] + H2O = L-glutamyl-[protein] + NH4(+)</text>
        <dbReference type="Rhea" id="RHEA:16441"/>
        <dbReference type="Rhea" id="RHEA-COMP:10207"/>
        <dbReference type="Rhea" id="RHEA-COMP:10208"/>
        <dbReference type="ChEBI" id="CHEBI:15377"/>
        <dbReference type="ChEBI" id="CHEBI:28938"/>
        <dbReference type="ChEBI" id="CHEBI:29973"/>
        <dbReference type="ChEBI" id="CHEBI:30011"/>
        <dbReference type="EC" id="3.5.1.44"/>
    </reaction>
</comment>
<comment type="subcellular location">
    <subcellularLocation>
        <location evidence="1">Cytoplasm</location>
    </subcellularLocation>
</comment>
<comment type="domain">
    <text evidence="1">Contains a C-terminal catalytic domain, and an N-terminal region which modulates catalytic activity.</text>
</comment>
<comment type="PTM">
    <text evidence="1">Phosphorylated by CheA. Phosphorylation of the N-terminal regulatory domain activates the methylesterase activity.</text>
</comment>
<comment type="similarity">
    <text evidence="1">Belongs to the CheB family.</text>
</comment>
<sequence length="334" mass="34802">MNIGIVNDLPLAVEAMRRAIARRPEHRVLWVATDGAQAVELCAAQPPDVVLMDLIMPKFDGIEATRRIMRSERPCAILIVTSCIGANAWRVFEAMGAGALDAVDTPRLGDGAAGDTTKLLLAKIDQIGRLLDAPGGTRLAGTAARAGGGPLIAIGASAGGPGALASILGGLPADFSAPIVIVQHVDRAFAEGMAQWLDGQTPLAVRVAREGDRPQPGVALLAATDDHLRITRAGTLEYTREPAATPYRPSVDVFFNSLTEHWPGRVIGVLLTGMGRDGAIGLKALRMKGYHTIAQDEATSAVYGMPKAAATLGAARAILPLGRIAGELAALARI</sequence>
<protein>
    <recommendedName>
        <fullName evidence="1">Protein-glutamate methylesterase/protein-glutamine glutaminase 1</fullName>
        <ecNumber evidence="1">3.1.1.61</ecNumber>
        <ecNumber evidence="1">3.5.1.44</ecNumber>
    </recommendedName>
</protein>
<dbReference type="EC" id="3.1.1.61" evidence="1"/>
<dbReference type="EC" id="3.5.1.44" evidence="1"/>
<dbReference type="EMBL" id="CP000152">
    <property type="protein sequence ID" value="ABB12130.1"/>
    <property type="molecule type" value="Genomic_DNA"/>
</dbReference>
<dbReference type="RefSeq" id="WP_011355614.1">
    <property type="nucleotide sequence ID" value="NC_007511.1"/>
</dbReference>
<dbReference type="SMR" id="Q394I6"/>
<dbReference type="GeneID" id="45098346"/>
<dbReference type="KEGG" id="bur:Bcep18194_B2017"/>
<dbReference type="PATRIC" id="fig|482957.22.peg.5762"/>
<dbReference type="HOGENOM" id="CLU_000445_51_0_4"/>
<dbReference type="Proteomes" id="UP000002705">
    <property type="component" value="Chromosome 2"/>
</dbReference>
<dbReference type="GO" id="GO:0005737">
    <property type="term" value="C:cytoplasm"/>
    <property type="evidence" value="ECO:0007669"/>
    <property type="project" value="UniProtKB-SubCell"/>
</dbReference>
<dbReference type="GO" id="GO:0000156">
    <property type="term" value="F:phosphorelay response regulator activity"/>
    <property type="evidence" value="ECO:0007669"/>
    <property type="project" value="InterPro"/>
</dbReference>
<dbReference type="GO" id="GO:0008984">
    <property type="term" value="F:protein-glutamate methylesterase activity"/>
    <property type="evidence" value="ECO:0007669"/>
    <property type="project" value="UniProtKB-UniRule"/>
</dbReference>
<dbReference type="GO" id="GO:0050568">
    <property type="term" value="F:protein-glutamine glutaminase activity"/>
    <property type="evidence" value="ECO:0007669"/>
    <property type="project" value="UniProtKB-UniRule"/>
</dbReference>
<dbReference type="GO" id="GO:0006935">
    <property type="term" value="P:chemotaxis"/>
    <property type="evidence" value="ECO:0007669"/>
    <property type="project" value="UniProtKB-UniRule"/>
</dbReference>
<dbReference type="CDD" id="cd16432">
    <property type="entry name" value="CheB_Rec"/>
    <property type="match status" value="1"/>
</dbReference>
<dbReference type="CDD" id="cd17541">
    <property type="entry name" value="REC_CheB-like"/>
    <property type="match status" value="1"/>
</dbReference>
<dbReference type="Gene3D" id="3.40.50.2300">
    <property type="match status" value="1"/>
</dbReference>
<dbReference type="Gene3D" id="3.40.50.180">
    <property type="entry name" value="Methylesterase CheB, C-terminal domain"/>
    <property type="match status" value="1"/>
</dbReference>
<dbReference type="HAMAP" id="MF_00099">
    <property type="entry name" value="CheB_chemtxs"/>
    <property type="match status" value="1"/>
</dbReference>
<dbReference type="InterPro" id="IPR008248">
    <property type="entry name" value="CheB-like"/>
</dbReference>
<dbReference type="InterPro" id="IPR035909">
    <property type="entry name" value="CheB_C"/>
</dbReference>
<dbReference type="InterPro" id="IPR011006">
    <property type="entry name" value="CheY-like_superfamily"/>
</dbReference>
<dbReference type="InterPro" id="IPR000673">
    <property type="entry name" value="Sig_transdc_resp-reg_Me-estase"/>
</dbReference>
<dbReference type="InterPro" id="IPR001789">
    <property type="entry name" value="Sig_transdc_resp-reg_receiver"/>
</dbReference>
<dbReference type="NCBIfam" id="NF009206">
    <property type="entry name" value="PRK12555.1"/>
    <property type="match status" value="1"/>
</dbReference>
<dbReference type="PANTHER" id="PTHR42872">
    <property type="entry name" value="PROTEIN-GLUTAMATE METHYLESTERASE/PROTEIN-GLUTAMINE GLUTAMINASE"/>
    <property type="match status" value="1"/>
</dbReference>
<dbReference type="PANTHER" id="PTHR42872:SF6">
    <property type="entry name" value="PROTEIN-GLUTAMATE METHYLESTERASE_PROTEIN-GLUTAMINE GLUTAMINASE"/>
    <property type="match status" value="1"/>
</dbReference>
<dbReference type="Pfam" id="PF01339">
    <property type="entry name" value="CheB_methylest"/>
    <property type="match status" value="1"/>
</dbReference>
<dbReference type="Pfam" id="PF00072">
    <property type="entry name" value="Response_reg"/>
    <property type="match status" value="1"/>
</dbReference>
<dbReference type="PIRSF" id="PIRSF000876">
    <property type="entry name" value="RR_chemtxs_CheB"/>
    <property type="match status" value="1"/>
</dbReference>
<dbReference type="SMART" id="SM00448">
    <property type="entry name" value="REC"/>
    <property type="match status" value="1"/>
</dbReference>
<dbReference type="SUPFAM" id="SSF52172">
    <property type="entry name" value="CheY-like"/>
    <property type="match status" value="1"/>
</dbReference>
<dbReference type="SUPFAM" id="SSF52738">
    <property type="entry name" value="Methylesterase CheB, C-terminal domain"/>
    <property type="match status" value="1"/>
</dbReference>
<dbReference type="PROSITE" id="PS50122">
    <property type="entry name" value="CHEB"/>
    <property type="match status" value="1"/>
</dbReference>
<dbReference type="PROSITE" id="PS50110">
    <property type="entry name" value="RESPONSE_REGULATORY"/>
    <property type="match status" value="1"/>
</dbReference>